<feature type="chain" id="PRO_0000419643" description="Kunitz-type serine protease inhibitor Vur-KIn">
    <location>
        <begin position="1"/>
        <end position="61"/>
    </location>
</feature>
<feature type="chain" id="PRO_0000419644" description="Kunitz-type serine protease inhibitor Vur-KIn, truncated">
    <location>
        <begin position="2"/>
        <end position="61"/>
    </location>
</feature>
<feature type="propeptide" id="PRO_0000419645">
    <location>
        <begin position="62"/>
        <end position="66"/>
    </location>
</feature>
<feature type="domain" description="BPTI/Kunitz inhibitor" evidence="2">
    <location>
        <begin position="7"/>
        <end position="57"/>
    </location>
</feature>
<feature type="site" description="Reactive bond for trypsin" evidence="1">
    <location>
        <begin position="17"/>
        <end position="18"/>
    </location>
</feature>
<feature type="modified residue" description="Pyrrolidone carboxylic acid" evidence="1">
    <location>
        <position position="1"/>
    </location>
</feature>
<feature type="disulfide bond" evidence="2">
    <location>
        <begin position="7"/>
        <end position="57"/>
    </location>
</feature>
<feature type="disulfide bond" evidence="2">
    <location>
        <begin position="16"/>
        <end position="40"/>
    </location>
</feature>
<feature type="disulfide bond" evidence="2">
    <location>
        <begin position="32"/>
        <end position="53"/>
    </location>
</feature>
<reference key="1">
    <citation type="journal article" date="2011" name="Toxicon">
        <title>cDNA cloning, structural, and functional analyses of venom phospholipases A and a Kunitz-type protease inhibitor from steppe viper Vipera ursinii renardi.</title>
        <authorList>
            <person name="Tsai I.-H."/>
            <person name="Wang Y.M."/>
            <person name="Cheng A.C."/>
            <person name="Starkov V."/>
            <person name="Osipov A."/>
            <person name="Nikitin I."/>
            <person name="Makarova Y."/>
            <person name="Ziganshin R."/>
            <person name="Utkin Y."/>
        </authorList>
    </citation>
    <scope>NUCLEOTIDE SEQUENCE [MRNA]</scope>
    <scope>PROTEIN SEQUENCE OF 2-27</scope>
    <scope>MASS SPECTROMETRY</scope>
    <source>
        <tissue>Venom</tissue>
        <tissue>Venom gland</tissue>
    </source>
</reference>
<evidence type="ECO:0000250" key="1"/>
<evidence type="ECO:0000255" key="2">
    <source>
        <dbReference type="PROSITE-ProRule" id="PRU00031"/>
    </source>
</evidence>
<evidence type="ECO:0000269" key="3">
    <source>
    </source>
</evidence>
<evidence type="ECO:0000305" key="4"/>
<sequence length="66" mass="7370">QDHPVFCYLPADPGICKAHKPRFYYNPASNKCKEFFYGGCGGNANNFKTRDECHHTCVASAMGRPT</sequence>
<comment type="function">
    <text evidence="1">Serine protease inhibitor.</text>
</comment>
<comment type="subcellular location">
    <subcellularLocation>
        <location>Secreted</location>
    </subcellularLocation>
</comment>
<comment type="tissue specificity">
    <text>Expressed by the venom gland.</text>
</comment>
<comment type="mass spectrometry" mass="6824.1" method="MALDI" evidence="3">
    <molecule>Kunitz-type serine protease inhibitor Vur-KIn</molecule>
</comment>
<comment type="mass spectrometry" mass="6695.3" method="MALDI" evidence="3">
    <molecule>Kunitz-type serine protease inhibitor Vur-KIn, truncated</molecule>
</comment>
<comment type="similarity">
    <text evidence="4">Belongs to the venom Kunitz-type family.</text>
</comment>
<comment type="caution">
    <text evidence="4">It is unsure if the sequence starts at position 1 or 2.</text>
</comment>
<comment type="caution">
    <text evidence="4">Two N-terminal sequences could be detected after automatic Edman degradation, one is the sequence AHKPRFYYNP, that corresponds to the fragment 18-27, and the other is DH., that possibly corresponds to the fragment 2-17. Vur-KIn possibly was partially degraded into two fragments which might be kept linked by disulfide bonds during sample preparation.</text>
</comment>
<protein>
    <recommendedName>
        <fullName>Kunitz-type serine protease inhibitor Vur-KIn</fullName>
    </recommendedName>
    <component>
        <recommendedName>
            <fullName>Kunitz-type serine protease inhibitor Vur-KIn, truncated</fullName>
        </recommendedName>
    </component>
</protein>
<proteinExistence type="evidence at protein level"/>
<name>VKT_VIPRE</name>
<dbReference type="SMR" id="P0DKL8"/>
<dbReference type="GO" id="GO:0005615">
    <property type="term" value="C:extracellular space"/>
    <property type="evidence" value="ECO:0007669"/>
    <property type="project" value="TreeGrafter"/>
</dbReference>
<dbReference type="GO" id="GO:0004867">
    <property type="term" value="F:serine-type endopeptidase inhibitor activity"/>
    <property type="evidence" value="ECO:0007669"/>
    <property type="project" value="UniProtKB-KW"/>
</dbReference>
<dbReference type="GO" id="GO:0090729">
    <property type="term" value="F:toxin activity"/>
    <property type="evidence" value="ECO:0007669"/>
    <property type="project" value="UniProtKB-KW"/>
</dbReference>
<dbReference type="CDD" id="cd22608">
    <property type="entry name" value="Kunitz_PPTI-like"/>
    <property type="match status" value="1"/>
</dbReference>
<dbReference type="FunFam" id="4.10.410.10:FF:000021">
    <property type="entry name" value="Serine protease inhibitor, putative"/>
    <property type="match status" value="1"/>
</dbReference>
<dbReference type="Gene3D" id="4.10.410.10">
    <property type="entry name" value="Pancreatic trypsin inhibitor Kunitz domain"/>
    <property type="match status" value="1"/>
</dbReference>
<dbReference type="InterPro" id="IPR002223">
    <property type="entry name" value="Kunitz_BPTI"/>
</dbReference>
<dbReference type="InterPro" id="IPR036880">
    <property type="entry name" value="Kunitz_BPTI_sf"/>
</dbReference>
<dbReference type="InterPro" id="IPR020901">
    <property type="entry name" value="Prtase_inh_Kunz-CS"/>
</dbReference>
<dbReference type="InterPro" id="IPR050098">
    <property type="entry name" value="TFPI/VKTCI-like"/>
</dbReference>
<dbReference type="PANTHER" id="PTHR10083:SF383">
    <property type="entry name" value="BPTI_KUNITZ INHIBITOR DOMAIN-CONTAINING PROTEIN"/>
    <property type="match status" value="1"/>
</dbReference>
<dbReference type="PANTHER" id="PTHR10083">
    <property type="entry name" value="KUNITZ-TYPE PROTEASE INHIBITOR-RELATED"/>
    <property type="match status" value="1"/>
</dbReference>
<dbReference type="Pfam" id="PF00014">
    <property type="entry name" value="Kunitz_BPTI"/>
    <property type="match status" value="1"/>
</dbReference>
<dbReference type="PRINTS" id="PR00759">
    <property type="entry name" value="BASICPTASE"/>
</dbReference>
<dbReference type="SMART" id="SM00131">
    <property type="entry name" value="KU"/>
    <property type="match status" value="1"/>
</dbReference>
<dbReference type="SUPFAM" id="SSF57362">
    <property type="entry name" value="BPTI-like"/>
    <property type="match status" value="1"/>
</dbReference>
<dbReference type="PROSITE" id="PS00280">
    <property type="entry name" value="BPTI_KUNITZ_1"/>
    <property type="match status" value="1"/>
</dbReference>
<dbReference type="PROSITE" id="PS50279">
    <property type="entry name" value="BPTI_KUNITZ_2"/>
    <property type="match status" value="1"/>
</dbReference>
<keyword id="KW-0903">Direct protein sequencing</keyword>
<keyword id="KW-1015">Disulfide bond</keyword>
<keyword id="KW-0646">Protease inhibitor</keyword>
<keyword id="KW-0873">Pyrrolidone carboxylic acid</keyword>
<keyword id="KW-0964">Secreted</keyword>
<keyword id="KW-0722">Serine protease inhibitor</keyword>
<keyword id="KW-0800">Toxin</keyword>
<organism>
    <name type="scientific">Vipera renardi</name>
    <name type="common">Steppe viper</name>
    <name type="synonym">Vipera ursinii renardi</name>
    <dbReference type="NCBI Taxonomy" id="927686"/>
    <lineage>
        <taxon>Eukaryota</taxon>
        <taxon>Metazoa</taxon>
        <taxon>Chordata</taxon>
        <taxon>Craniata</taxon>
        <taxon>Vertebrata</taxon>
        <taxon>Euteleostomi</taxon>
        <taxon>Lepidosauria</taxon>
        <taxon>Squamata</taxon>
        <taxon>Bifurcata</taxon>
        <taxon>Unidentata</taxon>
        <taxon>Episquamata</taxon>
        <taxon>Toxicofera</taxon>
        <taxon>Serpentes</taxon>
        <taxon>Colubroidea</taxon>
        <taxon>Viperidae</taxon>
        <taxon>Viperinae</taxon>
        <taxon>Vipera</taxon>
    </lineage>
</organism>
<accession>P0DKL8</accession>